<sequence>MSEQNNTEMAFQIQRIYTKDVSFEAPNAPHVFQKDWQPEVKLDLDTASSQLADDVYEVVLRVTVTASLGEETAFLCEVQQAGIFSISGIEGTQMAHCLGAYCPNILFPYARECITSLVSRGTFPQLNLAPVNFDALFMNYLQQQAGEGTEEHQDA</sequence>
<name>SECB_SALTI</name>
<comment type="function">
    <text evidence="1">One of the proteins required for the normal export of preproteins out of the cell cytoplasm. It is a molecular chaperone that binds to a subset of precursor proteins, maintaining them in a translocation-competent state. It also specifically binds to its receptor SecA.</text>
</comment>
<comment type="subunit">
    <text evidence="1">Homotetramer, a dimer of dimers. One homotetramer interacts with 1 SecA dimer.</text>
</comment>
<comment type="subcellular location">
    <subcellularLocation>
        <location evidence="1">Cytoplasm</location>
    </subcellularLocation>
</comment>
<comment type="similarity">
    <text evidence="1">Belongs to the SecB family.</text>
</comment>
<evidence type="ECO:0000255" key="1">
    <source>
        <dbReference type="HAMAP-Rule" id="MF_00821"/>
    </source>
</evidence>
<protein>
    <recommendedName>
        <fullName evidence="1">Protein-export protein SecB</fullName>
    </recommendedName>
</protein>
<dbReference type="EMBL" id="AL513382">
    <property type="protein sequence ID" value="CAD03293.1"/>
    <property type="molecule type" value="Genomic_DNA"/>
</dbReference>
<dbReference type="EMBL" id="AE014613">
    <property type="protein sequence ID" value="AAO71300.1"/>
    <property type="molecule type" value="Genomic_DNA"/>
</dbReference>
<dbReference type="RefSeq" id="NP_458226.1">
    <property type="nucleotide sequence ID" value="NC_003198.1"/>
</dbReference>
<dbReference type="RefSeq" id="WP_000003370.1">
    <property type="nucleotide sequence ID" value="NZ_WSUR01000001.1"/>
</dbReference>
<dbReference type="SMR" id="Q8XGG5"/>
<dbReference type="STRING" id="220341.gene:17587937"/>
<dbReference type="KEGG" id="stt:t3818"/>
<dbReference type="KEGG" id="sty:STY4094"/>
<dbReference type="PATRIC" id="fig|220341.7.peg.4180"/>
<dbReference type="eggNOG" id="COG1952">
    <property type="taxonomic scope" value="Bacteria"/>
</dbReference>
<dbReference type="HOGENOM" id="CLU_111574_1_0_6"/>
<dbReference type="OMA" id="CPNVLFP"/>
<dbReference type="OrthoDB" id="9795145at2"/>
<dbReference type="Proteomes" id="UP000000541">
    <property type="component" value="Chromosome"/>
</dbReference>
<dbReference type="Proteomes" id="UP000002670">
    <property type="component" value="Chromosome"/>
</dbReference>
<dbReference type="GO" id="GO:0005737">
    <property type="term" value="C:cytoplasm"/>
    <property type="evidence" value="ECO:0007669"/>
    <property type="project" value="UniProtKB-SubCell"/>
</dbReference>
<dbReference type="GO" id="GO:0051082">
    <property type="term" value="F:unfolded protein binding"/>
    <property type="evidence" value="ECO:0007669"/>
    <property type="project" value="InterPro"/>
</dbReference>
<dbReference type="GO" id="GO:0006457">
    <property type="term" value="P:protein folding"/>
    <property type="evidence" value="ECO:0007669"/>
    <property type="project" value="UniProtKB-UniRule"/>
</dbReference>
<dbReference type="GO" id="GO:0051262">
    <property type="term" value="P:protein tetramerization"/>
    <property type="evidence" value="ECO:0007669"/>
    <property type="project" value="InterPro"/>
</dbReference>
<dbReference type="GO" id="GO:0015031">
    <property type="term" value="P:protein transport"/>
    <property type="evidence" value="ECO:0007669"/>
    <property type="project" value="UniProtKB-UniRule"/>
</dbReference>
<dbReference type="CDD" id="cd00557">
    <property type="entry name" value="Translocase_SecB"/>
    <property type="match status" value="1"/>
</dbReference>
<dbReference type="FunFam" id="3.10.420.10:FF:000001">
    <property type="entry name" value="Protein-export chaperone SecB"/>
    <property type="match status" value="1"/>
</dbReference>
<dbReference type="Gene3D" id="3.10.420.10">
    <property type="entry name" value="SecB-like"/>
    <property type="match status" value="1"/>
</dbReference>
<dbReference type="HAMAP" id="MF_00821">
    <property type="entry name" value="SecB"/>
    <property type="match status" value="1"/>
</dbReference>
<dbReference type="InterPro" id="IPR003708">
    <property type="entry name" value="SecB"/>
</dbReference>
<dbReference type="InterPro" id="IPR035958">
    <property type="entry name" value="SecB-like_sf"/>
</dbReference>
<dbReference type="NCBIfam" id="NF004390">
    <property type="entry name" value="PRK05751.1-1"/>
    <property type="match status" value="1"/>
</dbReference>
<dbReference type="NCBIfam" id="NF004393">
    <property type="entry name" value="PRK05751.1-4"/>
    <property type="match status" value="1"/>
</dbReference>
<dbReference type="NCBIfam" id="TIGR00809">
    <property type="entry name" value="secB"/>
    <property type="match status" value="1"/>
</dbReference>
<dbReference type="PANTHER" id="PTHR36918">
    <property type="match status" value="1"/>
</dbReference>
<dbReference type="PANTHER" id="PTHR36918:SF1">
    <property type="entry name" value="PROTEIN-EXPORT PROTEIN SECB"/>
    <property type="match status" value="1"/>
</dbReference>
<dbReference type="Pfam" id="PF02556">
    <property type="entry name" value="SecB"/>
    <property type="match status" value="1"/>
</dbReference>
<dbReference type="PRINTS" id="PR01594">
    <property type="entry name" value="SECBCHAPRONE"/>
</dbReference>
<dbReference type="SUPFAM" id="SSF54611">
    <property type="entry name" value="SecB-like"/>
    <property type="match status" value="1"/>
</dbReference>
<reference key="1">
    <citation type="journal article" date="2001" name="Nature">
        <title>Complete genome sequence of a multiple drug resistant Salmonella enterica serovar Typhi CT18.</title>
        <authorList>
            <person name="Parkhill J."/>
            <person name="Dougan G."/>
            <person name="James K.D."/>
            <person name="Thomson N.R."/>
            <person name="Pickard D."/>
            <person name="Wain J."/>
            <person name="Churcher C.M."/>
            <person name="Mungall K.L."/>
            <person name="Bentley S.D."/>
            <person name="Holden M.T.G."/>
            <person name="Sebaihia M."/>
            <person name="Baker S."/>
            <person name="Basham D."/>
            <person name="Brooks K."/>
            <person name="Chillingworth T."/>
            <person name="Connerton P."/>
            <person name="Cronin A."/>
            <person name="Davis P."/>
            <person name="Davies R.M."/>
            <person name="Dowd L."/>
            <person name="White N."/>
            <person name="Farrar J."/>
            <person name="Feltwell T."/>
            <person name="Hamlin N."/>
            <person name="Haque A."/>
            <person name="Hien T.T."/>
            <person name="Holroyd S."/>
            <person name="Jagels K."/>
            <person name="Krogh A."/>
            <person name="Larsen T.S."/>
            <person name="Leather S."/>
            <person name="Moule S."/>
            <person name="O'Gaora P."/>
            <person name="Parry C."/>
            <person name="Quail M.A."/>
            <person name="Rutherford K.M."/>
            <person name="Simmonds M."/>
            <person name="Skelton J."/>
            <person name="Stevens K."/>
            <person name="Whitehead S."/>
            <person name="Barrell B.G."/>
        </authorList>
    </citation>
    <scope>NUCLEOTIDE SEQUENCE [LARGE SCALE GENOMIC DNA]</scope>
    <source>
        <strain>CT18</strain>
    </source>
</reference>
<reference key="2">
    <citation type="journal article" date="2003" name="J. Bacteriol.">
        <title>Comparative genomics of Salmonella enterica serovar Typhi strains Ty2 and CT18.</title>
        <authorList>
            <person name="Deng W."/>
            <person name="Liou S.-R."/>
            <person name="Plunkett G. III"/>
            <person name="Mayhew G.F."/>
            <person name="Rose D.J."/>
            <person name="Burland V."/>
            <person name="Kodoyianni V."/>
            <person name="Schwartz D.C."/>
            <person name="Blattner F.R."/>
        </authorList>
    </citation>
    <scope>NUCLEOTIDE SEQUENCE [LARGE SCALE GENOMIC DNA]</scope>
    <source>
        <strain>ATCC 700931 / Ty2</strain>
    </source>
</reference>
<feature type="chain" id="PRO_0000055414" description="Protein-export protein SecB">
    <location>
        <begin position="1"/>
        <end position="155"/>
    </location>
</feature>
<proteinExistence type="inferred from homology"/>
<gene>
    <name evidence="1" type="primary">secB</name>
    <name type="ordered locus">STY4094</name>
    <name type="ordered locus">t3818</name>
</gene>
<accession>Q8XGG5</accession>
<accession>Q7ALY3</accession>
<keyword id="KW-0143">Chaperone</keyword>
<keyword id="KW-0963">Cytoplasm</keyword>
<keyword id="KW-0653">Protein transport</keyword>
<keyword id="KW-0811">Translocation</keyword>
<keyword id="KW-0813">Transport</keyword>
<organism>
    <name type="scientific">Salmonella typhi</name>
    <dbReference type="NCBI Taxonomy" id="90370"/>
    <lineage>
        <taxon>Bacteria</taxon>
        <taxon>Pseudomonadati</taxon>
        <taxon>Pseudomonadota</taxon>
        <taxon>Gammaproteobacteria</taxon>
        <taxon>Enterobacterales</taxon>
        <taxon>Enterobacteriaceae</taxon>
        <taxon>Salmonella</taxon>
    </lineage>
</organism>